<organism>
    <name type="scientific">Rhodopseudomonas palustris (strain BisA53)</name>
    <dbReference type="NCBI Taxonomy" id="316055"/>
    <lineage>
        <taxon>Bacteria</taxon>
        <taxon>Pseudomonadati</taxon>
        <taxon>Pseudomonadota</taxon>
        <taxon>Alphaproteobacteria</taxon>
        <taxon>Hyphomicrobiales</taxon>
        <taxon>Nitrobacteraceae</taxon>
        <taxon>Rhodopseudomonas</taxon>
    </lineage>
</organism>
<reference key="1">
    <citation type="submission" date="2006-09" db="EMBL/GenBank/DDBJ databases">
        <title>Complete sequence of Rhodopseudomonas palustris BisA53.</title>
        <authorList>
            <consortium name="US DOE Joint Genome Institute"/>
            <person name="Copeland A."/>
            <person name="Lucas S."/>
            <person name="Lapidus A."/>
            <person name="Barry K."/>
            <person name="Detter J.C."/>
            <person name="Glavina del Rio T."/>
            <person name="Hammon N."/>
            <person name="Israni S."/>
            <person name="Dalin E."/>
            <person name="Tice H."/>
            <person name="Pitluck S."/>
            <person name="Chain P."/>
            <person name="Malfatti S."/>
            <person name="Shin M."/>
            <person name="Vergez L."/>
            <person name="Schmutz J."/>
            <person name="Larimer F."/>
            <person name="Land M."/>
            <person name="Hauser L."/>
            <person name="Pelletier D.A."/>
            <person name="Kyrpides N."/>
            <person name="Kim E."/>
            <person name="Harwood C.S."/>
            <person name="Oda Y."/>
            <person name="Richardson P."/>
        </authorList>
    </citation>
    <scope>NUCLEOTIDE SEQUENCE [LARGE SCALE GENOMIC DNA]</scope>
    <source>
        <strain>BisA53</strain>
    </source>
</reference>
<dbReference type="EMBL" id="CP000463">
    <property type="protein sequence ID" value="ABJ07521.1"/>
    <property type="status" value="ALT_INIT"/>
    <property type="molecule type" value="Genomic_DNA"/>
</dbReference>
<dbReference type="SMR" id="Q07KL3"/>
<dbReference type="STRING" id="316055.RPE_3591"/>
<dbReference type="KEGG" id="rpe:RPE_3591"/>
<dbReference type="eggNOG" id="COG0048">
    <property type="taxonomic scope" value="Bacteria"/>
</dbReference>
<dbReference type="HOGENOM" id="CLU_104295_1_2_5"/>
<dbReference type="OrthoDB" id="9802366at2"/>
<dbReference type="GO" id="GO:0015935">
    <property type="term" value="C:small ribosomal subunit"/>
    <property type="evidence" value="ECO:0007669"/>
    <property type="project" value="InterPro"/>
</dbReference>
<dbReference type="GO" id="GO:0019843">
    <property type="term" value="F:rRNA binding"/>
    <property type="evidence" value="ECO:0007669"/>
    <property type="project" value="UniProtKB-UniRule"/>
</dbReference>
<dbReference type="GO" id="GO:0003735">
    <property type="term" value="F:structural constituent of ribosome"/>
    <property type="evidence" value="ECO:0007669"/>
    <property type="project" value="InterPro"/>
</dbReference>
<dbReference type="GO" id="GO:0000049">
    <property type="term" value="F:tRNA binding"/>
    <property type="evidence" value="ECO:0007669"/>
    <property type="project" value="UniProtKB-UniRule"/>
</dbReference>
<dbReference type="GO" id="GO:0006412">
    <property type="term" value="P:translation"/>
    <property type="evidence" value="ECO:0007669"/>
    <property type="project" value="UniProtKB-UniRule"/>
</dbReference>
<dbReference type="CDD" id="cd03368">
    <property type="entry name" value="Ribosomal_S12"/>
    <property type="match status" value="1"/>
</dbReference>
<dbReference type="FunFam" id="2.40.50.140:FF:000001">
    <property type="entry name" value="30S ribosomal protein S12"/>
    <property type="match status" value="1"/>
</dbReference>
<dbReference type="Gene3D" id="2.40.50.140">
    <property type="entry name" value="Nucleic acid-binding proteins"/>
    <property type="match status" value="1"/>
</dbReference>
<dbReference type="HAMAP" id="MF_00403_B">
    <property type="entry name" value="Ribosomal_uS12_B"/>
    <property type="match status" value="1"/>
</dbReference>
<dbReference type="InterPro" id="IPR012340">
    <property type="entry name" value="NA-bd_OB-fold"/>
</dbReference>
<dbReference type="InterPro" id="IPR006032">
    <property type="entry name" value="Ribosomal_uS12"/>
</dbReference>
<dbReference type="InterPro" id="IPR005679">
    <property type="entry name" value="Ribosomal_uS12_bac"/>
</dbReference>
<dbReference type="NCBIfam" id="TIGR00981">
    <property type="entry name" value="rpsL_bact"/>
    <property type="match status" value="1"/>
</dbReference>
<dbReference type="PANTHER" id="PTHR11652">
    <property type="entry name" value="30S RIBOSOMAL PROTEIN S12 FAMILY MEMBER"/>
    <property type="match status" value="1"/>
</dbReference>
<dbReference type="Pfam" id="PF00164">
    <property type="entry name" value="Ribosom_S12_S23"/>
    <property type="match status" value="1"/>
</dbReference>
<dbReference type="PIRSF" id="PIRSF002133">
    <property type="entry name" value="Ribosomal_S12/S23"/>
    <property type="match status" value="1"/>
</dbReference>
<dbReference type="PRINTS" id="PR01034">
    <property type="entry name" value="RIBOSOMALS12"/>
</dbReference>
<dbReference type="SUPFAM" id="SSF50249">
    <property type="entry name" value="Nucleic acid-binding proteins"/>
    <property type="match status" value="1"/>
</dbReference>
<dbReference type="PROSITE" id="PS00055">
    <property type="entry name" value="RIBOSOMAL_S12"/>
    <property type="match status" value="1"/>
</dbReference>
<evidence type="ECO:0000250" key="1"/>
<evidence type="ECO:0000255" key="2">
    <source>
        <dbReference type="HAMAP-Rule" id="MF_00403"/>
    </source>
</evidence>
<evidence type="ECO:0000305" key="3"/>
<protein>
    <recommendedName>
        <fullName evidence="2">Small ribosomal subunit protein uS12</fullName>
    </recommendedName>
    <alternativeName>
        <fullName evidence="3">30S ribosomal protein S12</fullName>
    </alternativeName>
</protein>
<accession>Q07KL3</accession>
<comment type="function">
    <text evidence="2">With S4 and S5 plays an important role in translational accuracy.</text>
</comment>
<comment type="function">
    <text evidence="2">Interacts with and stabilizes bases of the 16S rRNA that are involved in tRNA selection in the A site and with the mRNA backbone. Located at the interface of the 30S and 50S subunits, it traverses the body of the 30S subunit contacting proteins on the other side and probably holding the rRNA structure together. The combined cluster of proteins S8, S12 and S17 appears to hold together the shoulder and platform of the 30S subunit.</text>
</comment>
<comment type="subunit">
    <text evidence="2">Part of the 30S ribosomal subunit. Contacts proteins S8 and S17. May interact with IF1 in the 30S initiation complex.</text>
</comment>
<comment type="similarity">
    <text evidence="2">Belongs to the universal ribosomal protein uS12 family.</text>
</comment>
<comment type="sequence caution" evidence="3">
    <conflict type="erroneous initiation">
        <sequence resource="EMBL-CDS" id="ABJ07521"/>
    </conflict>
</comment>
<gene>
    <name evidence="2" type="primary">rpsL</name>
    <name type="ordered locus">RPE_3591</name>
</gene>
<keyword id="KW-0488">Methylation</keyword>
<keyword id="KW-0687">Ribonucleoprotein</keyword>
<keyword id="KW-0689">Ribosomal protein</keyword>
<keyword id="KW-0694">RNA-binding</keyword>
<keyword id="KW-0699">rRNA-binding</keyword>
<keyword id="KW-0820">tRNA-binding</keyword>
<proteinExistence type="inferred from homology"/>
<sequence>MPTINQLIANPRVVQKSRKKVPALQQSPQKRGVCTRVYTTTPKKPNSALRKVAKVRLTNGFEVIGYIPGEGHNLQEHSVVMIRGGRVKDLPGVRYHILRGVLDTQGVKNRKQRRSKYGAKRPK</sequence>
<name>RS12_RHOP5</name>
<feature type="chain" id="PRO_0000296024" description="Small ribosomal subunit protein uS12">
    <location>
        <begin position="1"/>
        <end position="123"/>
    </location>
</feature>
<feature type="modified residue" description="3-methylthioaspartic acid" evidence="1">
    <location>
        <position position="89"/>
    </location>
</feature>